<gene>
    <name type="primary">rps19</name>
</gene>
<protein>
    <recommendedName>
        <fullName evidence="2">Small ribosomal subunit protein uS19c</fullName>
    </recommendedName>
    <alternativeName>
        <fullName>30S ribosomal protein S19, chloroplastic</fullName>
    </alternativeName>
</protein>
<comment type="function">
    <text evidence="1">Protein S19 forms a complex with S13 that binds strongly to the 16S ribosomal RNA.</text>
</comment>
<comment type="subcellular location">
    <subcellularLocation>
        <location>Plastid</location>
        <location>Chloroplast</location>
    </subcellularLocation>
</comment>
<comment type="similarity">
    <text evidence="2">Belongs to the universal ribosomal protein uS19 family.</text>
</comment>
<keyword id="KW-0150">Chloroplast</keyword>
<keyword id="KW-0934">Plastid</keyword>
<keyword id="KW-0687">Ribonucleoprotein</keyword>
<keyword id="KW-0689">Ribosomal protein</keyword>
<keyword id="KW-0694">RNA-binding</keyword>
<keyword id="KW-0699">rRNA-binding</keyword>
<sequence>MSRSLKKGPFVFYSLIKKVDQMNSNRFKSVILTWSRSCTIIPIMIGNTIGVYNGKEHIPVLVSDQMIGHKLGEFVQTRNYRGHKKHDKKTKTKR</sequence>
<proteinExistence type="inferred from homology"/>
<geneLocation type="chloroplast"/>
<reference key="1">
    <citation type="journal article" date="1988" name="Curr. Genet.">
        <title>Organization of ribosomal protein genes rpl23, rpl2, rps19, rpl22 and rps3 on the Euglena gracilis chloroplast genome.</title>
        <authorList>
            <person name="Christopher D.A."/>
            <person name="Cushman J.C."/>
            <person name="Price C.A."/>
            <person name="Hallick R.B."/>
        </authorList>
    </citation>
    <scope>NUCLEOTIDE SEQUENCE [GENOMIC DNA]</scope>
    <source>
        <strain>Z / UTEX 753</strain>
    </source>
</reference>
<reference key="2">
    <citation type="journal article" date="1993" name="Nucleic Acids Res.">
        <title>Complete sequence of Euglena gracilis chloroplast DNA.</title>
        <authorList>
            <person name="Hallick R.B."/>
            <person name="Hong L."/>
            <person name="Drager R.G."/>
            <person name="Favreau M.R."/>
            <person name="Monfort A."/>
            <person name="Orsat B."/>
            <person name="Spielmann A."/>
            <person name="Stutz E."/>
        </authorList>
    </citation>
    <scope>NUCLEOTIDE SEQUENCE [LARGE SCALE GENOMIC DNA]</scope>
    <source>
        <strain>Z / UTEX 753</strain>
    </source>
</reference>
<accession>P19170</accession>
<feature type="chain" id="PRO_0000129963" description="Small ribosomal subunit protein uS19c">
    <location>
        <begin position="1"/>
        <end position="94"/>
    </location>
</feature>
<evidence type="ECO:0000250" key="1"/>
<evidence type="ECO:0000305" key="2"/>
<name>RR19_EUGGR</name>
<dbReference type="EMBL" id="Z11874">
    <property type="protein sequence ID" value="CAA77918.1"/>
    <property type="molecule type" value="Genomic_DNA"/>
</dbReference>
<dbReference type="EMBL" id="M37463">
    <property type="protein sequence ID" value="AAA84225.1"/>
    <property type="molecule type" value="Genomic_DNA"/>
</dbReference>
<dbReference type="EMBL" id="X70810">
    <property type="protein sequence ID" value="CAA50101.1"/>
    <property type="molecule type" value="Genomic_DNA"/>
</dbReference>
<dbReference type="PIR" id="S26082">
    <property type="entry name" value="S26082"/>
</dbReference>
<dbReference type="RefSeq" id="NP_041914.1">
    <property type="nucleotide sequence ID" value="NC_001603.2"/>
</dbReference>
<dbReference type="SMR" id="P19170"/>
<dbReference type="GeneID" id="807504"/>
<dbReference type="GO" id="GO:0009507">
    <property type="term" value="C:chloroplast"/>
    <property type="evidence" value="ECO:0007669"/>
    <property type="project" value="UniProtKB-SubCell"/>
</dbReference>
<dbReference type="GO" id="GO:0005763">
    <property type="term" value="C:mitochondrial small ribosomal subunit"/>
    <property type="evidence" value="ECO:0007669"/>
    <property type="project" value="TreeGrafter"/>
</dbReference>
<dbReference type="GO" id="GO:0019843">
    <property type="term" value="F:rRNA binding"/>
    <property type="evidence" value="ECO:0007669"/>
    <property type="project" value="UniProtKB-UniRule"/>
</dbReference>
<dbReference type="GO" id="GO:0003735">
    <property type="term" value="F:structural constituent of ribosome"/>
    <property type="evidence" value="ECO:0007669"/>
    <property type="project" value="InterPro"/>
</dbReference>
<dbReference type="GO" id="GO:0000028">
    <property type="term" value="P:ribosomal small subunit assembly"/>
    <property type="evidence" value="ECO:0007669"/>
    <property type="project" value="TreeGrafter"/>
</dbReference>
<dbReference type="GO" id="GO:0006412">
    <property type="term" value="P:translation"/>
    <property type="evidence" value="ECO:0007669"/>
    <property type="project" value="UniProtKB-UniRule"/>
</dbReference>
<dbReference type="FunFam" id="3.30.860.10:FF:000001">
    <property type="entry name" value="30S ribosomal protein S19"/>
    <property type="match status" value="1"/>
</dbReference>
<dbReference type="Gene3D" id="3.30.860.10">
    <property type="entry name" value="30s Ribosomal Protein S19, Chain A"/>
    <property type="match status" value="1"/>
</dbReference>
<dbReference type="HAMAP" id="MF_00531">
    <property type="entry name" value="Ribosomal_uS19"/>
    <property type="match status" value="1"/>
</dbReference>
<dbReference type="InterPro" id="IPR002222">
    <property type="entry name" value="Ribosomal_uS19"/>
</dbReference>
<dbReference type="InterPro" id="IPR005732">
    <property type="entry name" value="Ribosomal_uS19_bac-type"/>
</dbReference>
<dbReference type="InterPro" id="IPR020934">
    <property type="entry name" value="Ribosomal_uS19_CS"/>
</dbReference>
<dbReference type="InterPro" id="IPR023575">
    <property type="entry name" value="Ribosomal_uS19_SF"/>
</dbReference>
<dbReference type="NCBIfam" id="TIGR01050">
    <property type="entry name" value="rpsS_bact"/>
    <property type="match status" value="1"/>
</dbReference>
<dbReference type="PANTHER" id="PTHR11880">
    <property type="entry name" value="RIBOSOMAL PROTEIN S19P FAMILY MEMBER"/>
    <property type="match status" value="1"/>
</dbReference>
<dbReference type="PANTHER" id="PTHR11880:SF8">
    <property type="entry name" value="SMALL RIBOSOMAL SUBUNIT PROTEIN US19M"/>
    <property type="match status" value="1"/>
</dbReference>
<dbReference type="Pfam" id="PF00203">
    <property type="entry name" value="Ribosomal_S19"/>
    <property type="match status" value="1"/>
</dbReference>
<dbReference type="PIRSF" id="PIRSF002144">
    <property type="entry name" value="Ribosomal_S19"/>
    <property type="match status" value="1"/>
</dbReference>
<dbReference type="PRINTS" id="PR00975">
    <property type="entry name" value="RIBOSOMALS19"/>
</dbReference>
<dbReference type="SUPFAM" id="SSF54570">
    <property type="entry name" value="Ribosomal protein S19"/>
    <property type="match status" value="1"/>
</dbReference>
<dbReference type="PROSITE" id="PS00323">
    <property type="entry name" value="RIBOSOMAL_S19"/>
    <property type="match status" value="1"/>
</dbReference>
<organism>
    <name type="scientific">Euglena gracilis</name>
    <dbReference type="NCBI Taxonomy" id="3039"/>
    <lineage>
        <taxon>Eukaryota</taxon>
        <taxon>Discoba</taxon>
        <taxon>Euglenozoa</taxon>
        <taxon>Euglenida</taxon>
        <taxon>Spirocuta</taxon>
        <taxon>Euglenophyceae</taxon>
        <taxon>Euglenales</taxon>
        <taxon>Euglenaceae</taxon>
        <taxon>Euglena</taxon>
    </lineage>
</organism>